<reference key="1">
    <citation type="journal article" date="2002" name="Mol. Biol. Evol.">
        <title>Multiple ribonuclease H-encoding genes in the Caenorhabditis elegans genome contrasts with the two typical ribonuclease H-encoding genes in the human genome.</title>
        <authorList>
            <person name="Arudchandran A.P."/>
            <person name="Cerritelli S.M."/>
            <person name="Bowen N.J."/>
            <person name="Chen X."/>
            <person name="Krause M.W."/>
            <person name="Crouch R.J."/>
        </authorList>
    </citation>
    <scope>NUCLEOTIDE SEQUENCE [MRNA]</scope>
</reference>
<reference key="2">
    <citation type="journal article" date="1998" name="Science">
        <title>Genome sequence of the nematode C. elegans: a platform for investigating biology.</title>
        <authorList>
            <consortium name="The C. elegans sequencing consortium"/>
        </authorList>
    </citation>
    <scope>NUCLEOTIDE SEQUENCE [LARGE SCALE GENOMIC DNA]</scope>
    <source>
        <strain>Bristol N2</strain>
    </source>
</reference>
<keyword id="KW-0255">Endonuclease</keyword>
<keyword id="KW-0378">Hydrolase</keyword>
<keyword id="KW-0479">Metal-binding</keyword>
<keyword id="KW-0540">Nuclease</keyword>
<keyword id="KW-1185">Reference proteome</keyword>
<sequence>MSLKCETERSKTWNNFGNGIPCVLGIDEAGRGPVLGPMVYAAAISPLDQNVELKNLGVDDSKALNEAKREEIFNKMNEDEDIQQIIAYALRCLSPELISCSMLKRQKYSLNEVSHEAAITLIRDALACNVNVVEIKVDTVGPKATYQAKLEKLFPGISICVTEKADSLFPIVSAASIAAKVTRDSRLRNWQFREKNIKVPDAGYGSGYPGDPNTKKFLQLSVEPVFGFCSLVRSSWKTASTIVEKRCVPGSWEDDEEEGKSQSKRMTSWMVPKNETEVVPKRNVYFKERHMSNILTF</sequence>
<accession>Q9U6P6</accession>
<comment type="function">
    <text evidence="1">Catalytic subunit of RNase HII, an endonuclease that specifically degrades the RNA of RNA:DNA hybrids. Participates in DNA replication, possibly by mediating the removal of lagging-strand Okazaki fragment RNA primers during DNA replication. Mediates the excision of single ribonucleotides from DNA:RNA duplexes (By similarity).</text>
</comment>
<comment type="catalytic activity">
    <reaction>
        <text>Endonucleolytic cleavage to 5'-phosphomonoester.</text>
        <dbReference type="EC" id="3.1.26.4"/>
    </reaction>
</comment>
<comment type="cofactor">
    <cofactor evidence="1">
        <name>Mn(2+)</name>
        <dbReference type="ChEBI" id="CHEBI:29035"/>
    </cofactor>
    <cofactor evidence="1">
        <name>Mg(2+)</name>
        <dbReference type="ChEBI" id="CHEBI:18420"/>
    </cofactor>
    <text evidence="1">Manganese or magnesium. Binds 1 divalent metal ion per monomer in the absence of substrate. May bind a second metal ion after substrate binding.</text>
</comment>
<comment type="similarity">
    <text evidence="3">Belongs to the RNase HII family. Eukaryotic subfamily.</text>
</comment>
<dbReference type="EC" id="3.1.26.4"/>
<dbReference type="EMBL" id="AF181619">
    <property type="protein sequence ID" value="AAF01208.1"/>
    <property type="molecule type" value="mRNA"/>
</dbReference>
<dbReference type="EMBL" id="Z66524">
    <property type="protein sequence ID" value="CAC70103.1"/>
    <property type="molecule type" value="Genomic_DNA"/>
</dbReference>
<dbReference type="RefSeq" id="NP_495796.1">
    <property type="nucleotide sequence ID" value="NM_063395.5"/>
</dbReference>
<dbReference type="SMR" id="Q9U6P6"/>
<dbReference type="BioGRID" id="57346">
    <property type="interactions" value="4"/>
</dbReference>
<dbReference type="FunCoup" id="Q9U6P6">
    <property type="interactions" value="1799"/>
</dbReference>
<dbReference type="STRING" id="6239.T13H5.7.1"/>
<dbReference type="PaxDb" id="6239-T13H5.7"/>
<dbReference type="PeptideAtlas" id="Q9U6P6"/>
<dbReference type="EnsemblMetazoa" id="T13H5.7.1">
    <property type="protein sequence ID" value="T13H5.7.1"/>
    <property type="gene ID" value="WBGene00004383"/>
</dbReference>
<dbReference type="GeneID" id="266861"/>
<dbReference type="KEGG" id="cel:CELE_T13H5.7"/>
<dbReference type="UCSC" id="T13H5.7">
    <property type="organism name" value="c. elegans"/>
</dbReference>
<dbReference type="AGR" id="WB:WBGene00004383"/>
<dbReference type="CTD" id="266861"/>
<dbReference type="WormBase" id="T13H5.7">
    <property type="protein sequence ID" value="CE28960"/>
    <property type="gene ID" value="WBGene00004383"/>
    <property type="gene designation" value="rnh-2"/>
</dbReference>
<dbReference type="eggNOG" id="KOG2299">
    <property type="taxonomic scope" value="Eukaryota"/>
</dbReference>
<dbReference type="GeneTree" id="ENSGT00390000010768"/>
<dbReference type="HOGENOM" id="CLU_036532_0_3_1"/>
<dbReference type="InParanoid" id="Q9U6P6"/>
<dbReference type="OMA" id="REECRFF"/>
<dbReference type="OrthoDB" id="7462577at2759"/>
<dbReference type="PhylomeDB" id="Q9U6P6"/>
<dbReference type="PRO" id="PR:Q9U6P6"/>
<dbReference type="Proteomes" id="UP000001940">
    <property type="component" value="Chromosome II"/>
</dbReference>
<dbReference type="Bgee" id="WBGene00004383">
    <property type="expression patterns" value="Expressed in embryo and 4 other cell types or tissues"/>
</dbReference>
<dbReference type="GO" id="GO:0032299">
    <property type="term" value="C:ribonuclease H2 complex"/>
    <property type="evidence" value="ECO:0000318"/>
    <property type="project" value="GO_Central"/>
</dbReference>
<dbReference type="GO" id="GO:0046872">
    <property type="term" value="F:metal ion binding"/>
    <property type="evidence" value="ECO:0007669"/>
    <property type="project" value="UniProtKB-KW"/>
</dbReference>
<dbReference type="GO" id="GO:0003723">
    <property type="term" value="F:RNA binding"/>
    <property type="evidence" value="ECO:0007669"/>
    <property type="project" value="InterPro"/>
</dbReference>
<dbReference type="GO" id="GO:0004523">
    <property type="term" value="F:RNA-DNA hybrid ribonuclease activity"/>
    <property type="evidence" value="ECO:0000318"/>
    <property type="project" value="GO_Central"/>
</dbReference>
<dbReference type="GO" id="GO:0043137">
    <property type="term" value="P:DNA replication, removal of RNA primer"/>
    <property type="evidence" value="ECO:0000318"/>
    <property type="project" value="GO_Central"/>
</dbReference>
<dbReference type="GO" id="GO:0006298">
    <property type="term" value="P:mismatch repair"/>
    <property type="evidence" value="ECO:0000318"/>
    <property type="project" value="GO_Central"/>
</dbReference>
<dbReference type="CDD" id="cd07181">
    <property type="entry name" value="RNase_HII_eukaryota_like"/>
    <property type="match status" value="1"/>
</dbReference>
<dbReference type="FunFam" id="1.10.10.460:FF:000001">
    <property type="entry name" value="Ribonuclease"/>
    <property type="match status" value="1"/>
</dbReference>
<dbReference type="FunFam" id="3.30.420.10:FF:000088">
    <property type="entry name" value="Ribonuclease"/>
    <property type="match status" value="1"/>
</dbReference>
<dbReference type="Gene3D" id="3.30.420.10">
    <property type="entry name" value="Ribonuclease H-like superfamily/Ribonuclease H"/>
    <property type="match status" value="1"/>
</dbReference>
<dbReference type="Gene3D" id="1.10.10.460">
    <property type="entry name" value="Ribonuclease hii. Domain 2"/>
    <property type="match status" value="1"/>
</dbReference>
<dbReference type="InterPro" id="IPR004649">
    <property type="entry name" value="RNase_H2_suA"/>
</dbReference>
<dbReference type="InterPro" id="IPR001352">
    <property type="entry name" value="RNase_HII/HIII"/>
</dbReference>
<dbReference type="InterPro" id="IPR024567">
    <property type="entry name" value="RNase_HII/HIII_dom"/>
</dbReference>
<dbReference type="InterPro" id="IPR023160">
    <property type="entry name" value="RNase_HII_hlx-loop-hlx_cap_dom"/>
</dbReference>
<dbReference type="InterPro" id="IPR012337">
    <property type="entry name" value="RNaseH-like_sf"/>
</dbReference>
<dbReference type="InterPro" id="IPR036397">
    <property type="entry name" value="RNaseH_sf"/>
</dbReference>
<dbReference type="NCBIfam" id="TIGR00729">
    <property type="entry name" value="ribonuclease HII"/>
    <property type="match status" value="1"/>
</dbReference>
<dbReference type="PANTHER" id="PTHR10954">
    <property type="entry name" value="RIBONUCLEASE H2 SUBUNIT A"/>
    <property type="match status" value="1"/>
</dbReference>
<dbReference type="PANTHER" id="PTHR10954:SF7">
    <property type="entry name" value="RIBONUCLEASE H2 SUBUNIT A"/>
    <property type="match status" value="1"/>
</dbReference>
<dbReference type="Pfam" id="PF01351">
    <property type="entry name" value="RNase_HII"/>
    <property type="match status" value="1"/>
</dbReference>
<dbReference type="SUPFAM" id="SSF53098">
    <property type="entry name" value="Ribonuclease H-like"/>
    <property type="match status" value="1"/>
</dbReference>
<dbReference type="PROSITE" id="PS51975">
    <property type="entry name" value="RNASE_H_2"/>
    <property type="match status" value="1"/>
</dbReference>
<evidence type="ECO:0000250" key="1"/>
<evidence type="ECO:0000255" key="2">
    <source>
        <dbReference type="PROSITE-ProRule" id="PRU01319"/>
    </source>
</evidence>
<evidence type="ECO:0000305" key="3"/>
<feature type="chain" id="PRO_0000111713" description="Ribonuclease H2 subunit A">
    <location>
        <begin position="1"/>
        <end position="297"/>
    </location>
</feature>
<feature type="domain" description="RNase H type-2" evidence="2">
    <location>
        <begin position="21"/>
        <end position="248"/>
    </location>
</feature>
<feature type="binding site" evidence="1">
    <location>
        <position position="27"/>
    </location>
    <ligand>
        <name>a divalent metal cation</name>
        <dbReference type="ChEBI" id="CHEBI:60240"/>
    </ligand>
</feature>
<feature type="binding site" evidence="1">
    <location>
        <position position="28"/>
    </location>
    <ligand>
        <name>a divalent metal cation</name>
        <dbReference type="ChEBI" id="CHEBI:60240"/>
    </ligand>
</feature>
<feature type="binding site" evidence="1">
    <location>
        <position position="138"/>
    </location>
    <ligand>
        <name>a divalent metal cation</name>
        <dbReference type="ChEBI" id="CHEBI:60240"/>
    </ligand>
</feature>
<name>RNH2A_CAEEL</name>
<gene>
    <name type="primary">rnh-2</name>
    <name type="synonym">rnh2</name>
    <name type="ORF">T13H5.7</name>
</gene>
<protein>
    <recommendedName>
        <fullName>Ribonuclease H2 subunit A</fullName>
        <shortName>RNase H2 subunit A</shortName>
        <ecNumber>3.1.26.4</ecNumber>
    </recommendedName>
    <alternativeName>
        <fullName>RNase H(35)</fullName>
    </alternativeName>
    <alternativeName>
        <fullName>Ribonuclease HI large subunit</fullName>
        <shortName>RNase HI large subunit</shortName>
    </alternativeName>
    <alternativeName>
        <fullName>Ribonuclease HI subunit A</fullName>
    </alternativeName>
</protein>
<organism>
    <name type="scientific">Caenorhabditis elegans</name>
    <dbReference type="NCBI Taxonomy" id="6239"/>
    <lineage>
        <taxon>Eukaryota</taxon>
        <taxon>Metazoa</taxon>
        <taxon>Ecdysozoa</taxon>
        <taxon>Nematoda</taxon>
        <taxon>Chromadorea</taxon>
        <taxon>Rhabditida</taxon>
        <taxon>Rhabditina</taxon>
        <taxon>Rhabditomorpha</taxon>
        <taxon>Rhabditoidea</taxon>
        <taxon>Rhabditidae</taxon>
        <taxon>Peloderinae</taxon>
        <taxon>Caenorhabditis</taxon>
    </lineage>
</organism>
<proteinExistence type="evidence at transcript level"/>